<gene>
    <name evidence="1" type="primary">proB</name>
    <name type="ordered locus">BR1844</name>
    <name type="ordered locus">BS1330_I1838</name>
</gene>
<proteinExistence type="inferred from homology"/>
<keyword id="KW-0028">Amino-acid biosynthesis</keyword>
<keyword id="KW-0067">ATP-binding</keyword>
<keyword id="KW-0963">Cytoplasm</keyword>
<keyword id="KW-0418">Kinase</keyword>
<keyword id="KW-0547">Nucleotide-binding</keyword>
<keyword id="KW-0641">Proline biosynthesis</keyword>
<keyword id="KW-0808">Transferase</keyword>
<reference key="1">
    <citation type="journal article" date="2002" name="Proc. Natl. Acad. Sci. U.S.A.">
        <title>The Brucella suis genome reveals fundamental similarities between animal and plant pathogens and symbionts.</title>
        <authorList>
            <person name="Paulsen I.T."/>
            <person name="Seshadri R."/>
            <person name="Nelson K.E."/>
            <person name="Eisen J.A."/>
            <person name="Heidelberg J.F."/>
            <person name="Read T.D."/>
            <person name="Dodson R.J."/>
            <person name="Umayam L.A."/>
            <person name="Brinkac L.M."/>
            <person name="Beanan M.J."/>
            <person name="Daugherty S.C."/>
            <person name="DeBoy R.T."/>
            <person name="Durkin A.S."/>
            <person name="Kolonay J.F."/>
            <person name="Madupu R."/>
            <person name="Nelson W.C."/>
            <person name="Ayodeji B."/>
            <person name="Kraul M."/>
            <person name="Shetty J."/>
            <person name="Malek J.A."/>
            <person name="Van Aken S.E."/>
            <person name="Riedmuller S."/>
            <person name="Tettelin H."/>
            <person name="Gill S.R."/>
            <person name="White O."/>
            <person name="Salzberg S.L."/>
            <person name="Hoover D.L."/>
            <person name="Lindler L.E."/>
            <person name="Halling S.M."/>
            <person name="Boyle S.M."/>
            <person name="Fraser C.M."/>
        </authorList>
    </citation>
    <scope>NUCLEOTIDE SEQUENCE [LARGE SCALE GENOMIC DNA]</scope>
    <source>
        <strain>1330</strain>
    </source>
</reference>
<reference key="2">
    <citation type="journal article" date="2011" name="J. Bacteriol.">
        <title>Revised genome sequence of Brucella suis 1330.</title>
        <authorList>
            <person name="Tae H."/>
            <person name="Shallom S."/>
            <person name="Settlage R."/>
            <person name="Preston D."/>
            <person name="Adams L.G."/>
            <person name="Garner H.R."/>
        </authorList>
    </citation>
    <scope>NUCLEOTIDE SEQUENCE [LARGE SCALE GENOMIC DNA]</scope>
    <source>
        <strain>1330</strain>
    </source>
</reference>
<comment type="function">
    <text evidence="1">Catalyzes the transfer of a phosphate group to glutamate to form L-glutamate 5-phosphate.</text>
</comment>
<comment type="catalytic activity">
    <reaction evidence="1">
        <text>L-glutamate + ATP = L-glutamyl 5-phosphate + ADP</text>
        <dbReference type="Rhea" id="RHEA:14877"/>
        <dbReference type="ChEBI" id="CHEBI:29985"/>
        <dbReference type="ChEBI" id="CHEBI:30616"/>
        <dbReference type="ChEBI" id="CHEBI:58274"/>
        <dbReference type="ChEBI" id="CHEBI:456216"/>
        <dbReference type="EC" id="2.7.2.11"/>
    </reaction>
</comment>
<comment type="pathway">
    <text evidence="1">Amino-acid biosynthesis; L-proline biosynthesis; L-glutamate 5-semialdehyde from L-glutamate: step 1/2.</text>
</comment>
<comment type="subcellular location">
    <subcellularLocation>
        <location evidence="1">Cytoplasm</location>
    </subcellularLocation>
</comment>
<comment type="similarity">
    <text evidence="1">Belongs to the glutamate 5-kinase family.</text>
</comment>
<dbReference type="EC" id="2.7.2.11" evidence="1"/>
<dbReference type="EMBL" id="AE014291">
    <property type="protein sequence ID" value="AAN30739.1"/>
    <property type="molecule type" value="Genomic_DNA"/>
</dbReference>
<dbReference type="EMBL" id="CP002997">
    <property type="protein sequence ID" value="AEM19156.1"/>
    <property type="molecule type" value="Genomic_DNA"/>
</dbReference>
<dbReference type="RefSeq" id="WP_004684325.1">
    <property type="nucleotide sequence ID" value="NZ_KN046804.1"/>
</dbReference>
<dbReference type="SMR" id="P65791"/>
<dbReference type="GeneID" id="97533036"/>
<dbReference type="KEGG" id="bms:BR1844"/>
<dbReference type="KEGG" id="bsi:BS1330_I1838"/>
<dbReference type="PATRIC" id="fig|204722.21.peg.3452"/>
<dbReference type="HOGENOM" id="CLU_025400_2_0_5"/>
<dbReference type="PhylomeDB" id="P65791"/>
<dbReference type="UniPathway" id="UPA00098">
    <property type="reaction ID" value="UER00359"/>
</dbReference>
<dbReference type="Proteomes" id="UP000007104">
    <property type="component" value="Chromosome I"/>
</dbReference>
<dbReference type="GO" id="GO:0005829">
    <property type="term" value="C:cytosol"/>
    <property type="evidence" value="ECO:0007669"/>
    <property type="project" value="TreeGrafter"/>
</dbReference>
<dbReference type="GO" id="GO:0005524">
    <property type="term" value="F:ATP binding"/>
    <property type="evidence" value="ECO:0007669"/>
    <property type="project" value="UniProtKB-KW"/>
</dbReference>
<dbReference type="GO" id="GO:0004349">
    <property type="term" value="F:glutamate 5-kinase activity"/>
    <property type="evidence" value="ECO:0007669"/>
    <property type="project" value="UniProtKB-UniRule"/>
</dbReference>
<dbReference type="GO" id="GO:0003723">
    <property type="term" value="F:RNA binding"/>
    <property type="evidence" value="ECO:0007669"/>
    <property type="project" value="InterPro"/>
</dbReference>
<dbReference type="GO" id="GO:0055129">
    <property type="term" value="P:L-proline biosynthetic process"/>
    <property type="evidence" value="ECO:0007669"/>
    <property type="project" value="UniProtKB-UniRule"/>
</dbReference>
<dbReference type="CDD" id="cd04242">
    <property type="entry name" value="AAK_G5K_ProB"/>
    <property type="match status" value="1"/>
</dbReference>
<dbReference type="CDD" id="cd21157">
    <property type="entry name" value="PUA_G5K"/>
    <property type="match status" value="1"/>
</dbReference>
<dbReference type="FunFam" id="2.30.130.10:FF:000007">
    <property type="entry name" value="Glutamate 5-kinase"/>
    <property type="match status" value="1"/>
</dbReference>
<dbReference type="FunFam" id="3.40.1160.10:FF:000018">
    <property type="entry name" value="Glutamate 5-kinase"/>
    <property type="match status" value="1"/>
</dbReference>
<dbReference type="Gene3D" id="3.40.1160.10">
    <property type="entry name" value="Acetylglutamate kinase-like"/>
    <property type="match status" value="1"/>
</dbReference>
<dbReference type="Gene3D" id="2.30.130.10">
    <property type="entry name" value="PUA domain"/>
    <property type="match status" value="1"/>
</dbReference>
<dbReference type="HAMAP" id="MF_00456">
    <property type="entry name" value="ProB"/>
    <property type="match status" value="1"/>
</dbReference>
<dbReference type="InterPro" id="IPR036393">
    <property type="entry name" value="AceGlu_kinase-like_sf"/>
</dbReference>
<dbReference type="InterPro" id="IPR001048">
    <property type="entry name" value="Asp/Glu/Uridylate_kinase"/>
</dbReference>
<dbReference type="InterPro" id="IPR041739">
    <property type="entry name" value="G5K_ProB"/>
</dbReference>
<dbReference type="InterPro" id="IPR001057">
    <property type="entry name" value="Glu/AcGlu_kinase"/>
</dbReference>
<dbReference type="InterPro" id="IPR011529">
    <property type="entry name" value="Glu_5kinase"/>
</dbReference>
<dbReference type="InterPro" id="IPR005715">
    <property type="entry name" value="Glu_5kinase/COase_Synthase"/>
</dbReference>
<dbReference type="InterPro" id="IPR019797">
    <property type="entry name" value="Glutamate_5-kinase_CS"/>
</dbReference>
<dbReference type="InterPro" id="IPR002478">
    <property type="entry name" value="PUA"/>
</dbReference>
<dbReference type="InterPro" id="IPR015947">
    <property type="entry name" value="PUA-like_sf"/>
</dbReference>
<dbReference type="InterPro" id="IPR036974">
    <property type="entry name" value="PUA_sf"/>
</dbReference>
<dbReference type="NCBIfam" id="TIGR01027">
    <property type="entry name" value="proB"/>
    <property type="match status" value="1"/>
</dbReference>
<dbReference type="PANTHER" id="PTHR43654">
    <property type="entry name" value="GLUTAMATE 5-KINASE"/>
    <property type="match status" value="1"/>
</dbReference>
<dbReference type="PANTHER" id="PTHR43654:SF1">
    <property type="entry name" value="ISOPENTENYL PHOSPHATE KINASE"/>
    <property type="match status" value="1"/>
</dbReference>
<dbReference type="Pfam" id="PF00696">
    <property type="entry name" value="AA_kinase"/>
    <property type="match status" value="1"/>
</dbReference>
<dbReference type="Pfam" id="PF01472">
    <property type="entry name" value="PUA"/>
    <property type="match status" value="1"/>
</dbReference>
<dbReference type="PIRSF" id="PIRSF000729">
    <property type="entry name" value="GK"/>
    <property type="match status" value="1"/>
</dbReference>
<dbReference type="PRINTS" id="PR00474">
    <property type="entry name" value="GLU5KINASE"/>
</dbReference>
<dbReference type="SMART" id="SM00359">
    <property type="entry name" value="PUA"/>
    <property type="match status" value="1"/>
</dbReference>
<dbReference type="SUPFAM" id="SSF53633">
    <property type="entry name" value="Carbamate kinase-like"/>
    <property type="match status" value="1"/>
</dbReference>
<dbReference type="SUPFAM" id="SSF88697">
    <property type="entry name" value="PUA domain-like"/>
    <property type="match status" value="1"/>
</dbReference>
<dbReference type="PROSITE" id="PS00902">
    <property type="entry name" value="GLUTAMATE_5_KINASE"/>
    <property type="match status" value="1"/>
</dbReference>
<dbReference type="PROSITE" id="PS50890">
    <property type="entry name" value="PUA"/>
    <property type="match status" value="1"/>
</dbReference>
<protein>
    <recommendedName>
        <fullName evidence="1">Glutamate 5-kinase</fullName>
        <ecNumber evidence="1">2.7.2.11</ecNumber>
    </recommendedName>
    <alternativeName>
        <fullName evidence="1">Gamma-glutamyl kinase</fullName>
        <shortName evidence="1">GK</shortName>
    </alternativeName>
</protein>
<feature type="chain" id="PRO_0000109653" description="Glutamate 5-kinase">
    <location>
        <begin position="1"/>
        <end position="378"/>
    </location>
</feature>
<feature type="domain" description="PUA" evidence="1">
    <location>
        <begin position="279"/>
        <end position="356"/>
    </location>
</feature>
<feature type="binding site" evidence="1">
    <location>
        <position position="14"/>
    </location>
    <ligand>
        <name>ATP</name>
        <dbReference type="ChEBI" id="CHEBI:30616"/>
    </ligand>
</feature>
<feature type="binding site" evidence="1">
    <location>
        <position position="54"/>
    </location>
    <ligand>
        <name>substrate</name>
    </ligand>
</feature>
<feature type="binding site" evidence="1">
    <location>
        <position position="141"/>
    </location>
    <ligand>
        <name>substrate</name>
    </ligand>
</feature>
<feature type="binding site" evidence="1">
    <location>
        <position position="153"/>
    </location>
    <ligand>
        <name>substrate</name>
    </ligand>
</feature>
<feature type="binding site" evidence="1">
    <location>
        <begin position="173"/>
        <end position="174"/>
    </location>
    <ligand>
        <name>ATP</name>
        <dbReference type="ChEBI" id="CHEBI:30616"/>
    </ligand>
</feature>
<organism>
    <name type="scientific">Brucella suis biovar 1 (strain 1330)</name>
    <dbReference type="NCBI Taxonomy" id="204722"/>
    <lineage>
        <taxon>Bacteria</taxon>
        <taxon>Pseudomonadati</taxon>
        <taxon>Pseudomonadota</taxon>
        <taxon>Alphaproteobacteria</taxon>
        <taxon>Hyphomicrobiales</taxon>
        <taxon>Brucellaceae</taxon>
        <taxon>Brucella/Ochrobactrum group</taxon>
        <taxon>Brucella</taxon>
    </lineage>
</organism>
<accession>P65791</accession>
<accession>G0K7R0</accession>
<accession>Q8YJ79</accession>
<evidence type="ECO:0000255" key="1">
    <source>
        <dbReference type="HAMAP-Rule" id="MF_00456"/>
    </source>
</evidence>
<sequence length="378" mass="39874">MLKKLKDYRRIVVKIGSALLVDRATGLKREWLESLGQDIAALQHAGVEVLVVSSGAIALGRTVLGLPKKALKLEESQAAAAAGQIALAKAYADVLGGHGIKSGQILVTLSDTEERRRYLNARATIETLLKLKAVPIINENDTVATTEIRYGDNDRLAARVATMMGADLLILLSDIDGLYTAPPHKNPDAQFLPFVETITPQIEAMAGAAASELSRGGMKTKLDAGKIANAAGTAMIITSGTRFGPLSAIDRGERATLFEAAHAPVNAWKTWISGNLEPAGRLTVDAGAVKALKSGKSLLPAGVKEVDGDFERGDTVAVMNEDGREIARGLIAYDAADARKVAGHKSDEISAILGYDARAAMIHRNDLVVRAASDAKAA</sequence>
<name>PROB_BRUSU</name>